<sequence>MAFVRSLLGAKKILSRSTAAGSAAPKGFLAVYVGESQKKRYLVPLSYLSQPSFQALLSKSEEEFGFAHPMGGLTIPCPEDTFINVTSRLQ</sequence>
<keyword id="KW-0927">Auxin signaling pathway</keyword>
<keyword id="KW-1003">Cell membrane</keyword>
<keyword id="KW-0217">Developmental protein</keyword>
<keyword id="KW-0341">Growth regulation</keyword>
<keyword id="KW-0472">Membrane</keyword>
<keyword id="KW-1185">Reference proteome</keyword>
<reference key="1">
    <citation type="journal article" date="1998" name="DNA Res.">
        <title>Structural analysis of Arabidopsis thaliana chromosome 5. VII. Sequence features of the regions of 1,013,767 bp covered by sixteen physically assigned P1 and TAC clones.</title>
        <authorList>
            <person name="Nakamura Y."/>
            <person name="Sato S."/>
            <person name="Asamizu E."/>
            <person name="Kaneko T."/>
            <person name="Kotani H."/>
            <person name="Miyajima N."/>
            <person name="Tabata S."/>
        </authorList>
    </citation>
    <scope>NUCLEOTIDE SEQUENCE [LARGE SCALE GENOMIC DNA]</scope>
    <source>
        <strain>cv. Columbia</strain>
    </source>
</reference>
<reference key="2">
    <citation type="journal article" date="2017" name="Plant J.">
        <title>Araport11: a complete reannotation of the Arabidopsis thaliana reference genome.</title>
        <authorList>
            <person name="Cheng C.Y."/>
            <person name="Krishnakumar V."/>
            <person name="Chan A.P."/>
            <person name="Thibaud-Nissen F."/>
            <person name="Schobel S."/>
            <person name="Town C.D."/>
        </authorList>
    </citation>
    <scope>GENOME REANNOTATION</scope>
    <source>
        <strain>cv. Columbia</strain>
    </source>
</reference>
<reference key="3">
    <citation type="submission" date="2004-01" db="EMBL/GenBank/DDBJ databases">
        <title>Arabidopsis ORF clones.</title>
        <authorList>
            <person name="Cheuk R.F."/>
            <person name="Chen H."/>
            <person name="Kim C.J."/>
            <person name="Shinn P."/>
            <person name="Ecker J.R."/>
        </authorList>
    </citation>
    <scope>NUCLEOTIDE SEQUENCE [LARGE SCALE MRNA]</scope>
    <source>
        <strain>cv. Columbia</strain>
    </source>
</reference>
<reference key="4">
    <citation type="submission" date="2006-07" db="EMBL/GenBank/DDBJ databases">
        <title>Large-scale analysis of RIKEN Arabidopsis full-length (RAFL) cDNAs.</title>
        <authorList>
            <person name="Totoki Y."/>
            <person name="Seki M."/>
            <person name="Ishida J."/>
            <person name="Nakajima M."/>
            <person name="Enju A."/>
            <person name="Kamiya A."/>
            <person name="Narusaka M."/>
            <person name="Shin-i T."/>
            <person name="Nakagawa M."/>
            <person name="Sakamoto N."/>
            <person name="Oishi K."/>
            <person name="Kohara Y."/>
            <person name="Kobayashi M."/>
            <person name="Toyoda A."/>
            <person name="Sakaki Y."/>
            <person name="Sakurai T."/>
            <person name="Iida K."/>
            <person name="Akiyama K."/>
            <person name="Satou M."/>
            <person name="Toyoda T."/>
            <person name="Konagaya A."/>
            <person name="Carninci P."/>
            <person name="Kawai J."/>
            <person name="Hayashizaki Y."/>
            <person name="Shinozaki K."/>
        </authorList>
    </citation>
    <scope>NUCLEOTIDE SEQUENCE [LARGE SCALE MRNA]</scope>
    <source>
        <strain>cv. Columbia</strain>
    </source>
</reference>
<reference key="5">
    <citation type="journal article" date="2002" name="Plant Mol. Biol.">
        <title>Auxin-responsive gene expression: genes, promoters and regulatory factors.</title>
        <authorList>
            <person name="Hagen G."/>
            <person name="Guilfoyle T.J."/>
        </authorList>
    </citation>
    <scope>GENE FAMILY</scope>
    <scope>NOMENCLATURE</scope>
</reference>
<reference key="6">
    <citation type="journal article" date="2012" name="Plant J.">
        <title>The SAUR19 subfamily of SMALL AUXIN UP RNA genes promote cell expansion.</title>
        <authorList>
            <person name="Spartz A.K."/>
            <person name="Lee S.H."/>
            <person name="Wenger J.P."/>
            <person name="Gonzalez N."/>
            <person name="Itoh H."/>
            <person name="Inze D."/>
            <person name="Peer W.A."/>
            <person name="Murphy A.S."/>
            <person name="Overvoorde P.J."/>
            <person name="Gray W.M."/>
        </authorList>
    </citation>
    <scope>FUNCTION</scope>
    <scope>SUBCELLULAR LOCATION</scope>
    <scope>INDUCTION BY AUXIN</scope>
</reference>
<reference key="7">
    <citation type="journal article" date="2014" name="Plant Cell">
        <title>SAUR inhibition of PP2C-D phosphatases activates plasma membrane H+-ATPases to promote cell expansion in Arabidopsis.</title>
        <authorList>
            <person name="Spartz A.K."/>
            <person name="Ren H."/>
            <person name="Park M.Y."/>
            <person name="Grandt K.N."/>
            <person name="Lee S.H."/>
            <person name="Murphy A.S."/>
            <person name="Sussman M.R."/>
            <person name="Overvoorde P.J."/>
            <person name="Gray W.M."/>
        </authorList>
    </citation>
    <scope>FUNCTION</scope>
    <scope>INTERACTION WITH PP2C67/PP2C-D1; PP2C64/PP2C-D5 AND PP2C46/PP2C-D6</scope>
    <source>
        <strain>cv. Columbia</strain>
    </source>
</reference>
<reference key="8">
    <citation type="journal article" date="2017" name="Plant Physiol.">
        <title>Constitutive expression of Arabidopsis SMALL AUXIN UP RNA19 (SAUR19) in tomato confers auxin-independent hypocotyl elongation.</title>
        <authorList>
            <person name="Spartz A.K."/>
            <person name="Lor V.S."/>
            <person name="Ren H."/>
            <person name="Olszewski N.E."/>
            <person name="Miller N.D."/>
            <person name="Wu G."/>
            <person name="Spalding E.P."/>
            <person name="Gray W.M."/>
        </authorList>
    </citation>
    <scope>FUNCTION</scope>
    <scope>INDUCTION BY AUXIN</scope>
</reference>
<reference key="9">
    <citation type="journal article" date="2019" name="Plant Cell Physiol.">
        <title>Brassinosteroid induces phosphorylation of the plasma membrane H+-ATPase during hypocotyl elongation in Arabidopsis thaliana.</title>
        <authorList>
            <person name="Minami A."/>
            <person name="Takahashi K."/>
            <person name="Inoue S.I."/>
            <person name="Tada Y."/>
            <person name="Kinoshita T."/>
        </authorList>
    </citation>
    <scope>INDUCTION BY BRASSINOLIDE</scope>
    <source>
        <strain>cv. Columbia</strain>
    </source>
</reference>
<organism>
    <name type="scientific">Arabidopsis thaliana</name>
    <name type="common">Mouse-ear cress</name>
    <dbReference type="NCBI Taxonomy" id="3702"/>
    <lineage>
        <taxon>Eukaryota</taxon>
        <taxon>Viridiplantae</taxon>
        <taxon>Streptophyta</taxon>
        <taxon>Embryophyta</taxon>
        <taxon>Tracheophyta</taxon>
        <taxon>Spermatophyta</taxon>
        <taxon>Magnoliopsida</taxon>
        <taxon>eudicotyledons</taxon>
        <taxon>Gunneridae</taxon>
        <taxon>Pentapetalae</taxon>
        <taxon>rosids</taxon>
        <taxon>malvids</taxon>
        <taxon>Brassicales</taxon>
        <taxon>Brassicaceae</taxon>
        <taxon>Camelineae</taxon>
        <taxon>Arabidopsis</taxon>
    </lineage>
</organism>
<comment type="function">
    <text evidence="1 2 3">Provide a mechanistic link between auxin and plasma membrane H(+)-ATPases (PM H(+)-ATPases, e.g. AHA1 and AHA2), and triggers PM H(+)-ATPases activity by promoting phosphorylation of their C-terminal autoinhibitory domain as a result of PP2C-D subfamily of type 2C phosphatases inhibition, thus leading to the acidification of the apoplast and the facilitation of solutes and water uptake to drive cell expansion (PubMed:24858935, PubMed:27999086). Prevents the apical hook maintenance of etiolated seedlings (PubMed:24858935). Functions as positive effectors of cell expansion through modulation of auxin transport (PubMed:22348445, PubMed:27999086).</text>
</comment>
<comment type="subunit">
    <text evidence="2">Interacts with and inhibits PP2C-D subfamily of type 2C phosphatases such as PP2C67/PP2C-D1, PP2C64/PP2C-D5 and PP2C46/PP2C-D6.</text>
</comment>
<comment type="subcellular location">
    <subcellularLocation>
        <location evidence="1">Cell membrane</location>
        <topology evidence="1">Peripheral membrane protein</topology>
    </subcellularLocation>
</comment>
<comment type="induction">
    <text evidence="1 3 4">By auxin (PubMed:22348445, PubMed:27999086). Triggered by brassinosteroids, including brassinolide (BL) (PubMed:30649552).</text>
</comment>
<comment type="miscellaneous">
    <text evidence="1">Seedlings over-expressing SAUR19 display auxin-related phenotypes. These phenotypes include increased cell expansion, increased hypocotyl and leaf size, defective apical hook maintenance, altered tropic responses and increased basipetal auxin transport in hypocotyls.</text>
</comment>
<comment type="similarity">
    <text evidence="6">Belongs to the ARG7 family.</text>
</comment>
<evidence type="ECO:0000269" key="1">
    <source>
    </source>
</evidence>
<evidence type="ECO:0000269" key="2">
    <source>
    </source>
</evidence>
<evidence type="ECO:0000269" key="3">
    <source>
    </source>
</evidence>
<evidence type="ECO:0000269" key="4">
    <source>
    </source>
</evidence>
<evidence type="ECO:0000303" key="5">
    <source>
    </source>
</evidence>
<evidence type="ECO:0000305" key="6"/>
<evidence type="ECO:0000312" key="7">
    <source>
        <dbReference type="Araport" id="AT5G18010"/>
    </source>
</evidence>
<evidence type="ECO:0000312" key="8">
    <source>
        <dbReference type="EMBL" id="BAB08400.1"/>
    </source>
</evidence>
<proteinExistence type="evidence at protein level"/>
<feature type="chain" id="PRO_0000433061" description="Auxin-responsive protein SAUR19">
    <location>
        <begin position="1"/>
        <end position="90"/>
    </location>
</feature>
<gene>
    <name evidence="5" type="primary">SAUR19</name>
    <name evidence="7" type="ordered locus">At5g18010</name>
    <name evidence="8" type="ORF">MCM23.9</name>
</gene>
<protein>
    <recommendedName>
        <fullName evidence="6">Auxin-responsive protein SAUR19</fullName>
    </recommendedName>
    <alternativeName>
        <fullName evidence="5">Protein SMALL AUXIN UP RNA 19</fullName>
    </alternativeName>
</protein>
<dbReference type="EMBL" id="AB015473">
    <property type="protein sequence ID" value="BAB08400.1"/>
    <property type="molecule type" value="Genomic_DNA"/>
</dbReference>
<dbReference type="EMBL" id="CP002688">
    <property type="protein sequence ID" value="AED92495.1"/>
    <property type="molecule type" value="Genomic_DNA"/>
</dbReference>
<dbReference type="EMBL" id="BT010805">
    <property type="protein sequence ID" value="AAR24172.1"/>
    <property type="molecule type" value="mRNA"/>
</dbReference>
<dbReference type="EMBL" id="BT011287">
    <property type="protein sequence ID" value="AAR92323.1"/>
    <property type="molecule type" value="mRNA"/>
</dbReference>
<dbReference type="EMBL" id="AK229287">
    <property type="protein sequence ID" value="BAF01150.1"/>
    <property type="molecule type" value="mRNA"/>
</dbReference>
<dbReference type="RefSeq" id="NP_197302.1">
    <property type="nucleotide sequence ID" value="NM_121806.5"/>
</dbReference>
<dbReference type="FunCoup" id="Q9FJG1">
    <property type="interactions" value="293"/>
</dbReference>
<dbReference type="IntAct" id="Q9FJG1">
    <property type="interactions" value="1"/>
</dbReference>
<dbReference type="STRING" id="3702.Q9FJG1"/>
<dbReference type="PaxDb" id="3702-AT5G18010.1"/>
<dbReference type="EnsemblPlants" id="AT5G18010.1">
    <property type="protein sequence ID" value="AT5G18010.1"/>
    <property type="gene ID" value="AT5G18010"/>
</dbReference>
<dbReference type="GeneID" id="831668"/>
<dbReference type="Gramene" id="AT5G18010.1">
    <property type="protein sequence ID" value="AT5G18010.1"/>
    <property type="gene ID" value="AT5G18010"/>
</dbReference>
<dbReference type="KEGG" id="ath:AT5G18010"/>
<dbReference type="Araport" id="AT5G18010"/>
<dbReference type="TAIR" id="AT5G18010">
    <property type="gene designation" value="SAUR19"/>
</dbReference>
<dbReference type="eggNOG" id="ENOG502STBD">
    <property type="taxonomic scope" value="Eukaryota"/>
</dbReference>
<dbReference type="HOGENOM" id="CLU_098106_3_0_1"/>
<dbReference type="InParanoid" id="Q9FJG1"/>
<dbReference type="OMA" id="TIHCEED"/>
<dbReference type="PhylomeDB" id="Q9FJG1"/>
<dbReference type="PRO" id="PR:Q9FJG1"/>
<dbReference type="Proteomes" id="UP000006548">
    <property type="component" value="Chromosome 5"/>
</dbReference>
<dbReference type="ExpressionAtlas" id="Q9FJG1">
    <property type="expression patterns" value="baseline and differential"/>
</dbReference>
<dbReference type="GO" id="GO:0005886">
    <property type="term" value="C:plasma membrane"/>
    <property type="evidence" value="ECO:0007669"/>
    <property type="project" value="UniProtKB-SubCell"/>
</dbReference>
<dbReference type="GO" id="GO:0009734">
    <property type="term" value="P:auxin-activated signaling pathway"/>
    <property type="evidence" value="ECO:0007669"/>
    <property type="project" value="UniProtKB-KW"/>
</dbReference>
<dbReference type="GO" id="GO:0030307">
    <property type="term" value="P:positive regulation of cell growth"/>
    <property type="evidence" value="ECO:0000315"/>
    <property type="project" value="UniProtKB"/>
</dbReference>
<dbReference type="GO" id="GO:2000012">
    <property type="term" value="P:regulation of auxin polar transport"/>
    <property type="evidence" value="ECO:0000315"/>
    <property type="project" value="UniProtKB"/>
</dbReference>
<dbReference type="GO" id="GO:0009733">
    <property type="term" value="P:response to auxin"/>
    <property type="evidence" value="ECO:0000270"/>
    <property type="project" value="UniProtKB"/>
</dbReference>
<dbReference type="GO" id="GO:0009741">
    <property type="term" value="P:response to brassinosteroid"/>
    <property type="evidence" value="ECO:0000270"/>
    <property type="project" value="UniProtKB"/>
</dbReference>
<dbReference type="InterPro" id="IPR003676">
    <property type="entry name" value="SAUR_fam"/>
</dbReference>
<dbReference type="PANTHER" id="PTHR31929">
    <property type="entry name" value="SAUR-LIKE AUXIN-RESPONSIVE PROTEIN FAMILY-RELATED"/>
    <property type="match status" value="1"/>
</dbReference>
<dbReference type="Pfam" id="PF02519">
    <property type="entry name" value="Auxin_inducible"/>
    <property type="match status" value="1"/>
</dbReference>
<accession>Q9FJG1</accession>
<name>SAU19_ARATH</name>